<gene>
    <name type="primary">U69</name>
    <name type="synonym">15R</name>
</gene>
<organismHost>
    <name type="scientific">Homo sapiens</name>
    <name type="common">Human</name>
    <dbReference type="NCBI Taxonomy" id="9606"/>
</organismHost>
<feature type="chain" id="PRO_0000088194" description="Probable ganciclovir kinase">
    <location>
        <begin position="1"/>
        <end position="562"/>
    </location>
</feature>
<feature type="region of interest" description="Disordered" evidence="3">
    <location>
        <begin position="1"/>
        <end position="32"/>
    </location>
</feature>
<feature type="compositionally biased region" description="Polar residues" evidence="3">
    <location>
        <begin position="1"/>
        <end position="16"/>
    </location>
</feature>
<feature type="active site" description="Proton acceptor" evidence="2">
    <location>
        <position position="313"/>
    </location>
</feature>
<feature type="binding site" evidence="1">
    <location>
        <begin position="201"/>
        <end position="209"/>
    </location>
    <ligand>
        <name>ATP</name>
        <dbReference type="ChEBI" id="CHEBI:30616"/>
    </ligand>
</feature>
<feature type="binding site" evidence="1">
    <location>
        <position position="218"/>
    </location>
    <ligand>
        <name>ATP</name>
        <dbReference type="ChEBI" id="CHEBI:30616"/>
    </ligand>
</feature>
<protein>
    <recommendedName>
        <fullName>Probable ganciclovir kinase</fullName>
        <ecNumber>2.7.1.-</ecNumber>
    </recommendedName>
</protein>
<accession>P24446</accession>
<organism>
    <name type="scientific">Human herpesvirus 6A (strain Uganda-1102)</name>
    <name type="common">HHV-6 variant A</name>
    <name type="synonym">Human B lymphotropic virus</name>
    <dbReference type="NCBI Taxonomy" id="10370"/>
    <lineage>
        <taxon>Viruses</taxon>
        <taxon>Duplodnaviria</taxon>
        <taxon>Heunggongvirae</taxon>
        <taxon>Peploviricota</taxon>
        <taxon>Herviviricetes</taxon>
        <taxon>Herpesvirales</taxon>
        <taxon>Orthoherpesviridae</taxon>
        <taxon>Betaherpesvirinae</taxon>
        <taxon>Roseolovirus</taxon>
        <taxon>Roseolovirus humanbeta6a</taxon>
        <taxon>Human betaherpesvirus 6A</taxon>
    </lineage>
</organism>
<proteinExistence type="inferred from homology"/>
<comment type="function">
    <text evidence="1">Phosphorylates the antiviral nucleoside analog ganciclovir.</text>
</comment>
<comment type="similarity">
    <text evidence="4">Belongs to the protein kinase superfamily. Tyr protein kinase family. HCMV ganciclovir subfamily.</text>
</comment>
<sequence>MDNGVETPQGQKTQPINLPPVRKKLRKHEGLGKGVKRKLFAEDSSPLKKQISACSDMETLSSPVKSECESRSASLDESFGKCKHEIACDCSAIEELLCHESLLDSPMKLSNAHTIFSSNKWKLELEKIIASKQIFLDMSENAELAAYGETLCNLRIFEKISSPFLFDVQSEERSYSVVYVPHNKELCGQFCQPEKTMARVLGVGAYGKVFDLDKVAIKTANEDESVISAFIAGVIRAKSGADLLSHECVINNLLISNSVCMSHKVSLSRTYDIDLHKFEDWDVRNVMNYYSVFCKLADAVRFLNLKCRINHFDISPMNIFLNHKKEIIFDAVLADYSLSEMHPNYNGTCAIAKEYDKNLQLVPISRNKFCDMFNPGFRPLVANAMILVNVCGAFDGENNPLRHCNLDLCAFAQVVLSCVLRMTDKRGCREAQLYYEKRLFALANEACRLNPLKYPFAYRDACCKVLAEHVVLLGLLFYRDVVEIYEKLYDFLDERGEFGSRDLFEATFLNNSKLTRRQPIREGLASLQSSEYGEKLLHDLRELFLINSTADLDKDTSSLFHM</sequence>
<dbReference type="EC" id="2.7.1.-"/>
<dbReference type="EMBL" id="M68963">
    <property type="protein sequence ID" value="AAA65577.1"/>
    <property type="molecule type" value="Genomic_DNA"/>
</dbReference>
<dbReference type="EMBL" id="X83413">
    <property type="protein sequence ID" value="CAA58361.1"/>
    <property type="molecule type" value="Genomic_DNA"/>
</dbReference>
<dbReference type="PIR" id="E36769">
    <property type="entry name" value="QQBEH5"/>
</dbReference>
<dbReference type="RefSeq" id="NP_042962.1">
    <property type="nucleotide sequence ID" value="NC_001664.2"/>
</dbReference>
<dbReference type="DNASU" id="1487950"/>
<dbReference type="GeneID" id="1487950"/>
<dbReference type="KEGG" id="vg:1487950"/>
<dbReference type="Proteomes" id="UP000009295">
    <property type="component" value="Segment"/>
</dbReference>
<dbReference type="GO" id="GO:0005524">
    <property type="term" value="F:ATP binding"/>
    <property type="evidence" value="ECO:0007669"/>
    <property type="project" value="UniProtKB-KW"/>
</dbReference>
<dbReference type="GO" id="GO:0004672">
    <property type="term" value="F:protein kinase activity"/>
    <property type="evidence" value="ECO:0007669"/>
    <property type="project" value="InterPro"/>
</dbReference>
<dbReference type="GO" id="GO:0016032">
    <property type="term" value="P:viral process"/>
    <property type="evidence" value="ECO:0007669"/>
    <property type="project" value="InterPro"/>
</dbReference>
<dbReference type="Gene3D" id="1.10.510.10">
    <property type="entry name" value="Transferase(Phosphotransferase) domain 1"/>
    <property type="match status" value="1"/>
</dbReference>
<dbReference type="InterPro" id="IPR010615">
    <property type="entry name" value="Herpes_UL97"/>
</dbReference>
<dbReference type="InterPro" id="IPR011009">
    <property type="entry name" value="Kinase-like_dom_sf"/>
</dbReference>
<dbReference type="InterPro" id="IPR008266">
    <property type="entry name" value="Tyr_kinase_AS"/>
</dbReference>
<dbReference type="Pfam" id="PF06734">
    <property type="entry name" value="UL97"/>
    <property type="match status" value="1"/>
</dbReference>
<dbReference type="SUPFAM" id="SSF56112">
    <property type="entry name" value="Protein kinase-like (PK-like)"/>
    <property type="match status" value="1"/>
</dbReference>
<dbReference type="PROSITE" id="PS00109">
    <property type="entry name" value="PROTEIN_KINASE_TYR"/>
    <property type="match status" value="1"/>
</dbReference>
<name>GCVK_HHV6U</name>
<evidence type="ECO:0000250" key="1"/>
<evidence type="ECO:0000255" key="2">
    <source>
        <dbReference type="PROSITE-ProRule" id="PRU10028"/>
    </source>
</evidence>
<evidence type="ECO:0000256" key="3">
    <source>
        <dbReference type="SAM" id="MobiDB-lite"/>
    </source>
</evidence>
<evidence type="ECO:0000305" key="4"/>
<reference key="1">
    <citation type="journal article" date="1990" name="J. Virol.">
        <title>Human herpesvirus 6 is closely related to human cytomegalovirus.</title>
        <authorList>
            <person name="Lawrence G.L."/>
            <person name="Chee M."/>
            <person name="Craxton M.A."/>
            <person name="Gompels U.A."/>
            <person name="Honess R.W."/>
            <person name="Barrell B.G."/>
        </authorList>
    </citation>
    <scope>NUCLEOTIDE SEQUENCE [GENOMIC DNA]</scope>
</reference>
<reference key="2">
    <citation type="journal article" date="1995" name="Virology">
        <title>The DNA sequence of human herpesvirus-6: structure, coding content, and genome evolution.</title>
        <authorList>
            <person name="Gompels U.A."/>
            <person name="Nicholas J."/>
            <person name="Lawrence G.L."/>
            <person name="Jones M."/>
            <person name="Thomson B.J."/>
            <person name="Martin M.E.D."/>
            <person name="Efstathiou S."/>
            <person name="Craxton M.A."/>
            <person name="Macaulay H.A."/>
        </authorList>
    </citation>
    <scope>NUCLEOTIDE SEQUENCE [LARGE SCALE GENOMIC DNA]</scope>
</reference>
<keyword id="KW-0067">ATP-binding</keyword>
<keyword id="KW-0244">Early protein</keyword>
<keyword id="KW-0418">Kinase</keyword>
<keyword id="KW-0547">Nucleotide-binding</keyword>
<keyword id="KW-1185">Reference proteome</keyword>
<keyword id="KW-0808">Transferase</keyword>